<dbReference type="EC" id="6.1.1.23" evidence="1"/>
<dbReference type="EMBL" id="CP000548">
    <property type="protein sequence ID" value="ABO06116.1"/>
    <property type="molecule type" value="Genomic_DNA"/>
</dbReference>
<dbReference type="RefSeq" id="WP_004189849.1">
    <property type="nucleotide sequence ID" value="NZ_CP007802.1"/>
</dbReference>
<dbReference type="SMR" id="A3MNU6"/>
<dbReference type="GeneID" id="93059156"/>
<dbReference type="KEGG" id="bmaz:BM44_885"/>
<dbReference type="KEGG" id="bmn:BMA10247_2406"/>
<dbReference type="PATRIC" id="fig|320389.8.peg.984"/>
<dbReference type="GO" id="GO:0005737">
    <property type="term" value="C:cytoplasm"/>
    <property type="evidence" value="ECO:0007669"/>
    <property type="project" value="UniProtKB-SubCell"/>
</dbReference>
<dbReference type="GO" id="GO:0004815">
    <property type="term" value="F:aspartate-tRNA ligase activity"/>
    <property type="evidence" value="ECO:0007669"/>
    <property type="project" value="UniProtKB-UniRule"/>
</dbReference>
<dbReference type="GO" id="GO:0050560">
    <property type="term" value="F:aspartate-tRNA(Asn) ligase activity"/>
    <property type="evidence" value="ECO:0007669"/>
    <property type="project" value="UniProtKB-EC"/>
</dbReference>
<dbReference type="GO" id="GO:0005524">
    <property type="term" value="F:ATP binding"/>
    <property type="evidence" value="ECO:0007669"/>
    <property type="project" value="UniProtKB-UniRule"/>
</dbReference>
<dbReference type="GO" id="GO:0003676">
    <property type="term" value="F:nucleic acid binding"/>
    <property type="evidence" value="ECO:0007669"/>
    <property type="project" value="InterPro"/>
</dbReference>
<dbReference type="GO" id="GO:0006422">
    <property type="term" value="P:aspartyl-tRNA aminoacylation"/>
    <property type="evidence" value="ECO:0007669"/>
    <property type="project" value="UniProtKB-UniRule"/>
</dbReference>
<dbReference type="CDD" id="cd00777">
    <property type="entry name" value="AspRS_core"/>
    <property type="match status" value="1"/>
</dbReference>
<dbReference type="CDD" id="cd04317">
    <property type="entry name" value="EcAspRS_like_N"/>
    <property type="match status" value="1"/>
</dbReference>
<dbReference type="Gene3D" id="3.30.930.10">
    <property type="entry name" value="Bira Bifunctional Protein, Domain 2"/>
    <property type="match status" value="1"/>
</dbReference>
<dbReference type="Gene3D" id="3.30.1360.30">
    <property type="entry name" value="GAD-like domain"/>
    <property type="match status" value="1"/>
</dbReference>
<dbReference type="Gene3D" id="2.40.50.140">
    <property type="entry name" value="Nucleic acid-binding proteins"/>
    <property type="match status" value="1"/>
</dbReference>
<dbReference type="HAMAP" id="MF_00044">
    <property type="entry name" value="Asp_tRNA_synth_type1"/>
    <property type="match status" value="1"/>
</dbReference>
<dbReference type="InterPro" id="IPR004364">
    <property type="entry name" value="Aa-tRNA-synt_II"/>
</dbReference>
<dbReference type="InterPro" id="IPR006195">
    <property type="entry name" value="aa-tRNA-synth_II"/>
</dbReference>
<dbReference type="InterPro" id="IPR045864">
    <property type="entry name" value="aa-tRNA-synth_II/BPL/LPL"/>
</dbReference>
<dbReference type="InterPro" id="IPR004524">
    <property type="entry name" value="Asp-tRNA-ligase_1"/>
</dbReference>
<dbReference type="InterPro" id="IPR047089">
    <property type="entry name" value="Asp-tRNA-ligase_1_N"/>
</dbReference>
<dbReference type="InterPro" id="IPR002312">
    <property type="entry name" value="Asp/Asn-tRNA-synth_IIb"/>
</dbReference>
<dbReference type="InterPro" id="IPR047090">
    <property type="entry name" value="AspRS_core"/>
</dbReference>
<dbReference type="InterPro" id="IPR004115">
    <property type="entry name" value="GAD-like_sf"/>
</dbReference>
<dbReference type="InterPro" id="IPR029351">
    <property type="entry name" value="GAD_dom"/>
</dbReference>
<dbReference type="InterPro" id="IPR012340">
    <property type="entry name" value="NA-bd_OB-fold"/>
</dbReference>
<dbReference type="InterPro" id="IPR004365">
    <property type="entry name" value="NA-bd_OB_tRNA"/>
</dbReference>
<dbReference type="NCBIfam" id="TIGR00459">
    <property type="entry name" value="aspS_bact"/>
    <property type="match status" value="1"/>
</dbReference>
<dbReference type="NCBIfam" id="NF001750">
    <property type="entry name" value="PRK00476.1"/>
    <property type="match status" value="1"/>
</dbReference>
<dbReference type="PANTHER" id="PTHR22594:SF5">
    <property type="entry name" value="ASPARTATE--TRNA LIGASE, MITOCHONDRIAL"/>
    <property type="match status" value="1"/>
</dbReference>
<dbReference type="PANTHER" id="PTHR22594">
    <property type="entry name" value="ASPARTYL/LYSYL-TRNA SYNTHETASE"/>
    <property type="match status" value="1"/>
</dbReference>
<dbReference type="Pfam" id="PF02938">
    <property type="entry name" value="GAD"/>
    <property type="match status" value="1"/>
</dbReference>
<dbReference type="Pfam" id="PF00152">
    <property type="entry name" value="tRNA-synt_2"/>
    <property type="match status" value="1"/>
</dbReference>
<dbReference type="Pfam" id="PF01336">
    <property type="entry name" value="tRNA_anti-codon"/>
    <property type="match status" value="1"/>
</dbReference>
<dbReference type="PRINTS" id="PR01042">
    <property type="entry name" value="TRNASYNTHASP"/>
</dbReference>
<dbReference type="SUPFAM" id="SSF55681">
    <property type="entry name" value="Class II aaRS and biotin synthetases"/>
    <property type="match status" value="1"/>
</dbReference>
<dbReference type="SUPFAM" id="SSF55261">
    <property type="entry name" value="GAD domain-like"/>
    <property type="match status" value="1"/>
</dbReference>
<dbReference type="SUPFAM" id="SSF50249">
    <property type="entry name" value="Nucleic acid-binding proteins"/>
    <property type="match status" value="1"/>
</dbReference>
<dbReference type="PROSITE" id="PS50862">
    <property type="entry name" value="AA_TRNA_LIGASE_II"/>
    <property type="match status" value="1"/>
</dbReference>
<sequence length="600" mass="67680">MSMRTEYCGLVTEHLLGQTVSLCGWVHRRRDHGGVIFIDLRDREGLVQVVCDPDRAEMFAAAEGVRNEFCIQVKGLVRGRPEGTINAGLKSGRIEVLCHELNVLNASVTPPFQLDDDNLSETTRLTHRVLDLRRPQMQHNLRLRYRVAIEARKYLDEQGFIDIETPMLTKSTPEGARDYLVPSRVNAGQFFALPQSPQLFKQLLMVANFDRYYQITKCFRDEDLRADRQPEFTQIDCETSFLGEQEIRDLFEDMIRHIFKTTIGVELDATFPVMPYSEAMARFGSDKPDLRVKLEFTELTDAMKDVDFKVFSTPANTKDGRVAALRVPKGGELTRGDIDGYTEFVRIYGAKGLAWIKVNERAKGRDGLQSPIVKNLHDASIAAILERTGAQDGDIIFFAADRAKVVNDSLGALRLKIGHSEFGKANGLVEAGWKPLWVVDFPMFEYDDEEARYVAAHHPFTSPKDEHLEYLETDPGRCLAKAYDMVLNGWEIGGGSVRIHREEVQSKVFRALKIGPEEAQAKFGFLLDALQYGAPPHGGIAFGLDRIVTMMAGADSIRDVIAFPKTQRAQCLLTQAPSPVDERQLRELHIRLRQPEQPKA</sequence>
<proteinExistence type="inferred from homology"/>
<accession>A3MNU6</accession>
<name>SYDND_BURM7</name>
<evidence type="ECO:0000255" key="1">
    <source>
        <dbReference type="HAMAP-Rule" id="MF_00044"/>
    </source>
</evidence>
<gene>
    <name evidence="1" type="primary">aspS</name>
    <name type="ordered locus">BMA10247_2406</name>
</gene>
<reference key="1">
    <citation type="journal article" date="2010" name="Genome Biol. Evol.">
        <title>Continuing evolution of Burkholderia mallei through genome reduction and large-scale rearrangements.</title>
        <authorList>
            <person name="Losada L."/>
            <person name="Ronning C.M."/>
            <person name="DeShazer D."/>
            <person name="Woods D."/>
            <person name="Fedorova N."/>
            <person name="Kim H.S."/>
            <person name="Shabalina S.A."/>
            <person name="Pearson T.R."/>
            <person name="Brinkac L."/>
            <person name="Tan P."/>
            <person name="Nandi T."/>
            <person name="Crabtree J."/>
            <person name="Badger J."/>
            <person name="Beckstrom-Sternberg S."/>
            <person name="Saqib M."/>
            <person name="Schutzer S.E."/>
            <person name="Keim P."/>
            <person name="Nierman W.C."/>
        </authorList>
    </citation>
    <scope>NUCLEOTIDE SEQUENCE [LARGE SCALE GENOMIC DNA]</scope>
    <source>
        <strain>NCTC 10247</strain>
    </source>
</reference>
<protein>
    <recommendedName>
        <fullName evidence="1">Aspartate--tRNA(Asp/Asn) ligase</fullName>
        <ecNumber evidence="1">6.1.1.23</ecNumber>
    </recommendedName>
    <alternativeName>
        <fullName evidence="1">Aspartyl-tRNA synthetase</fullName>
        <shortName evidence="1">AspRS</shortName>
    </alternativeName>
    <alternativeName>
        <fullName evidence="1">Non-discriminating aspartyl-tRNA synthetase</fullName>
        <shortName evidence="1">ND-AspRS</shortName>
    </alternativeName>
</protein>
<keyword id="KW-0030">Aminoacyl-tRNA synthetase</keyword>
<keyword id="KW-0067">ATP-binding</keyword>
<keyword id="KW-0963">Cytoplasm</keyword>
<keyword id="KW-0436">Ligase</keyword>
<keyword id="KW-0547">Nucleotide-binding</keyword>
<keyword id="KW-0648">Protein biosynthesis</keyword>
<organism>
    <name type="scientific">Burkholderia mallei (strain NCTC 10247)</name>
    <dbReference type="NCBI Taxonomy" id="320389"/>
    <lineage>
        <taxon>Bacteria</taxon>
        <taxon>Pseudomonadati</taxon>
        <taxon>Pseudomonadota</taxon>
        <taxon>Betaproteobacteria</taxon>
        <taxon>Burkholderiales</taxon>
        <taxon>Burkholderiaceae</taxon>
        <taxon>Burkholderia</taxon>
        <taxon>pseudomallei group</taxon>
    </lineage>
</organism>
<comment type="function">
    <text evidence="1">Aspartyl-tRNA synthetase with relaxed tRNA specificity since it is able to aspartylate not only its cognate tRNA(Asp) but also tRNA(Asn). Reaction proceeds in two steps: L-aspartate is first activated by ATP to form Asp-AMP and then transferred to the acceptor end of tRNA(Asp/Asn).</text>
</comment>
<comment type="catalytic activity">
    <reaction evidence="1">
        <text>tRNA(Asx) + L-aspartate + ATP = L-aspartyl-tRNA(Asx) + AMP + diphosphate</text>
        <dbReference type="Rhea" id="RHEA:18349"/>
        <dbReference type="Rhea" id="RHEA-COMP:9710"/>
        <dbReference type="Rhea" id="RHEA-COMP:9711"/>
        <dbReference type="ChEBI" id="CHEBI:29991"/>
        <dbReference type="ChEBI" id="CHEBI:30616"/>
        <dbReference type="ChEBI" id="CHEBI:33019"/>
        <dbReference type="ChEBI" id="CHEBI:78442"/>
        <dbReference type="ChEBI" id="CHEBI:78516"/>
        <dbReference type="ChEBI" id="CHEBI:456215"/>
        <dbReference type="EC" id="6.1.1.23"/>
    </reaction>
</comment>
<comment type="subunit">
    <text evidence="1">Homodimer.</text>
</comment>
<comment type="subcellular location">
    <subcellularLocation>
        <location evidence="1">Cytoplasm</location>
    </subcellularLocation>
</comment>
<comment type="similarity">
    <text evidence="1">Belongs to the class-II aminoacyl-tRNA synthetase family. Type 1 subfamily.</text>
</comment>
<feature type="chain" id="PRO_1000006647" description="Aspartate--tRNA(Asp/Asn) ligase">
    <location>
        <begin position="1"/>
        <end position="600"/>
    </location>
</feature>
<feature type="region of interest" description="Aspartate" evidence="1">
    <location>
        <begin position="198"/>
        <end position="201"/>
    </location>
</feature>
<feature type="binding site" evidence="1">
    <location>
        <position position="174"/>
    </location>
    <ligand>
        <name>L-aspartate</name>
        <dbReference type="ChEBI" id="CHEBI:29991"/>
    </ligand>
</feature>
<feature type="binding site" evidence="1">
    <location>
        <begin position="220"/>
        <end position="222"/>
    </location>
    <ligand>
        <name>ATP</name>
        <dbReference type="ChEBI" id="CHEBI:30616"/>
    </ligand>
</feature>
<feature type="binding site" evidence="1">
    <location>
        <position position="220"/>
    </location>
    <ligand>
        <name>L-aspartate</name>
        <dbReference type="ChEBI" id="CHEBI:29991"/>
    </ligand>
</feature>
<feature type="binding site" evidence="1">
    <location>
        <position position="229"/>
    </location>
    <ligand>
        <name>ATP</name>
        <dbReference type="ChEBI" id="CHEBI:30616"/>
    </ligand>
</feature>
<feature type="binding site" evidence="1">
    <location>
        <position position="457"/>
    </location>
    <ligand>
        <name>L-aspartate</name>
        <dbReference type="ChEBI" id="CHEBI:29991"/>
    </ligand>
</feature>
<feature type="binding site" evidence="1">
    <location>
        <position position="491"/>
    </location>
    <ligand>
        <name>ATP</name>
        <dbReference type="ChEBI" id="CHEBI:30616"/>
    </ligand>
</feature>
<feature type="binding site" evidence="1">
    <location>
        <position position="498"/>
    </location>
    <ligand>
        <name>L-aspartate</name>
        <dbReference type="ChEBI" id="CHEBI:29991"/>
    </ligand>
</feature>
<feature type="binding site" evidence="1">
    <location>
        <begin position="543"/>
        <end position="546"/>
    </location>
    <ligand>
        <name>ATP</name>
        <dbReference type="ChEBI" id="CHEBI:30616"/>
    </ligand>
</feature>
<feature type="site" description="Important for tRNA non-discrimination" evidence="1">
    <location>
        <position position="32"/>
    </location>
</feature>
<feature type="site" description="Important for tRNA non-discrimination" evidence="1">
    <location>
        <position position="83"/>
    </location>
</feature>